<name>CHK1_MOUSE</name>
<reference key="1">
    <citation type="journal article" date="1997" name="Science">
        <title>Conservation of the Chk1 checkpoint pathway in mammals: linkage of DNA damage to Cdk regulation through Cdc25.</title>
        <authorList>
            <person name="Sanchez Y."/>
            <person name="Wong C."/>
            <person name="Thoma R.S."/>
            <person name="Richman R."/>
            <person name="Wu Z."/>
            <person name="Piwnica-Worms H."/>
            <person name="Elledge S.J."/>
        </authorList>
    </citation>
    <scope>NUCLEOTIDE SEQUENCE [MRNA] (ISOFORM 1)</scope>
    <scope>TISSUE SPECIFICITY</scope>
</reference>
<reference key="2">
    <citation type="journal article" date="2005" name="Science">
        <title>The transcriptional landscape of the mammalian genome.</title>
        <authorList>
            <person name="Carninci P."/>
            <person name="Kasukawa T."/>
            <person name="Katayama S."/>
            <person name="Gough J."/>
            <person name="Frith M.C."/>
            <person name="Maeda N."/>
            <person name="Oyama R."/>
            <person name="Ravasi T."/>
            <person name="Lenhard B."/>
            <person name="Wells C."/>
            <person name="Kodzius R."/>
            <person name="Shimokawa K."/>
            <person name="Bajic V.B."/>
            <person name="Brenner S.E."/>
            <person name="Batalov S."/>
            <person name="Forrest A.R."/>
            <person name="Zavolan M."/>
            <person name="Davis M.J."/>
            <person name="Wilming L.G."/>
            <person name="Aidinis V."/>
            <person name="Allen J.E."/>
            <person name="Ambesi-Impiombato A."/>
            <person name="Apweiler R."/>
            <person name="Aturaliya R.N."/>
            <person name="Bailey T.L."/>
            <person name="Bansal M."/>
            <person name="Baxter L."/>
            <person name="Beisel K.W."/>
            <person name="Bersano T."/>
            <person name="Bono H."/>
            <person name="Chalk A.M."/>
            <person name="Chiu K.P."/>
            <person name="Choudhary V."/>
            <person name="Christoffels A."/>
            <person name="Clutterbuck D.R."/>
            <person name="Crowe M.L."/>
            <person name="Dalla E."/>
            <person name="Dalrymple B.P."/>
            <person name="de Bono B."/>
            <person name="Della Gatta G."/>
            <person name="di Bernardo D."/>
            <person name="Down T."/>
            <person name="Engstrom P."/>
            <person name="Fagiolini M."/>
            <person name="Faulkner G."/>
            <person name="Fletcher C.F."/>
            <person name="Fukushima T."/>
            <person name="Furuno M."/>
            <person name="Futaki S."/>
            <person name="Gariboldi M."/>
            <person name="Georgii-Hemming P."/>
            <person name="Gingeras T.R."/>
            <person name="Gojobori T."/>
            <person name="Green R.E."/>
            <person name="Gustincich S."/>
            <person name="Harbers M."/>
            <person name="Hayashi Y."/>
            <person name="Hensch T.K."/>
            <person name="Hirokawa N."/>
            <person name="Hill D."/>
            <person name="Huminiecki L."/>
            <person name="Iacono M."/>
            <person name="Ikeo K."/>
            <person name="Iwama A."/>
            <person name="Ishikawa T."/>
            <person name="Jakt M."/>
            <person name="Kanapin A."/>
            <person name="Katoh M."/>
            <person name="Kawasawa Y."/>
            <person name="Kelso J."/>
            <person name="Kitamura H."/>
            <person name="Kitano H."/>
            <person name="Kollias G."/>
            <person name="Krishnan S.P."/>
            <person name="Kruger A."/>
            <person name="Kummerfeld S.K."/>
            <person name="Kurochkin I.V."/>
            <person name="Lareau L.F."/>
            <person name="Lazarevic D."/>
            <person name="Lipovich L."/>
            <person name="Liu J."/>
            <person name="Liuni S."/>
            <person name="McWilliam S."/>
            <person name="Madan Babu M."/>
            <person name="Madera M."/>
            <person name="Marchionni L."/>
            <person name="Matsuda H."/>
            <person name="Matsuzawa S."/>
            <person name="Miki H."/>
            <person name="Mignone F."/>
            <person name="Miyake S."/>
            <person name="Morris K."/>
            <person name="Mottagui-Tabar S."/>
            <person name="Mulder N."/>
            <person name="Nakano N."/>
            <person name="Nakauchi H."/>
            <person name="Ng P."/>
            <person name="Nilsson R."/>
            <person name="Nishiguchi S."/>
            <person name="Nishikawa S."/>
            <person name="Nori F."/>
            <person name="Ohara O."/>
            <person name="Okazaki Y."/>
            <person name="Orlando V."/>
            <person name="Pang K.C."/>
            <person name="Pavan W.J."/>
            <person name="Pavesi G."/>
            <person name="Pesole G."/>
            <person name="Petrovsky N."/>
            <person name="Piazza S."/>
            <person name="Reed J."/>
            <person name="Reid J.F."/>
            <person name="Ring B.Z."/>
            <person name="Ringwald M."/>
            <person name="Rost B."/>
            <person name="Ruan Y."/>
            <person name="Salzberg S.L."/>
            <person name="Sandelin A."/>
            <person name="Schneider C."/>
            <person name="Schoenbach C."/>
            <person name="Sekiguchi K."/>
            <person name="Semple C.A."/>
            <person name="Seno S."/>
            <person name="Sessa L."/>
            <person name="Sheng Y."/>
            <person name="Shibata Y."/>
            <person name="Shimada H."/>
            <person name="Shimada K."/>
            <person name="Silva D."/>
            <person name="Sinclair B."/>
            <person name="Sperling S."/>
            <person name="Stupka E."/>
            <person name="Sugiura K."/>
            <person name="Sultana R."/>
            <person name="Takenaka Y."/>
            <person name="Taki K."/>
            <person name="Tammoja K."/>
            <person name="Tan S.L."/>
            <person name="Tang S."/>
            <person name="Taylor M.S."/>
            <person name="Tegner J."/>
            <person name="Teichmann S.A."/>
            <person name="Ueda H.R."/>
            <person name="van Nimwegen E."/>
            <person name="Verardo R."/>
            <person name="Wei C.L."/>
            <person name="Yagi K."/>
            <person name="Yamanishi H."/>
            <person name="Zabarovsky E."/>
            <person name="Zhu S."/>
            <person name="Zimmer A."/>
            <person name="Hide W."/>
            <person name="Bult C."/>
            <person name="Grimmond S.M."/>
            <person name="Teasdale R.D."/>
            <person name="Liu E.T."/>
            <person name="Brusic V."/>
            <person name="Quackenbush J."/>
            <person name="Wahlestedt C."/>
            <person name="Mattick J.S."/>
            <person name="Hume D.A."/>
            <person name="Kai C."/>
            <person name="Sasaki D."/>
            <person name="Tomaru Y."/>
            <person name="Fukuda S."/>
            <person name="Kanamori-Katayama M."/>
            <person name="Suzuki M."/>
            <person name="Aoki J."/>
            <person name="Arakawa T."/>
            <person name="Iida J."/>
            <person name="Imamura K."/>
            <person name="Itoh M."/>
            <person name="Kato T."/>
            <person name="Kawaji H."/>
            <person name="Kawagashira N."/>
            <person name="Kawashima T."/>
            <person name="Kojima M."/>
            <person name="Kondo S."/>
            <person name="Konno H."/>
            <person name="Nakano K."/>
            <person name="Ninomiya N."/>
            <person name="Nishio T."/>
            <person name="Okada M."/>
            <person name="Plessy C."/>
            <person name="Shibata K."/>
            <person name="Shiraki T."/>
            <person name="Suzuki S."/>
            <person name="Tagami M."/>
            <person name="Waki K."/>
            <person name="Watahiki A."/>
            <person name="Okamura-Oho Y."/>
            <person name="Suzuki H."/>
            <person name="Kawai J."/>
            <person name="Hayashizaki Y."/>
        </authorList>
    </citation>
    <scope>NUCLEOTIDE SEQUENCE [LARGE SCALE MRNA] (ISOFORM 1)</scope>
    <source>
        <strain>C57BL/6J</strain>
        <tissue>Embryo</tissue>
        <tissue>Testis</tissue>
    </source>
</reference>
<reference key="3">
    <citation type="journal article" date="2004" name="Genome Res.">
        <title>The status, quality, and expansion of the NIH full-length cDNA project: the Mammalian Gene Collection (MGC).</title>
        <authorList>
            <consortium name="The MGC Project Team"/>
        </authorList>
    </citation>
    <scope>NUCLEOTIDE SEQUENCE [LARGE SCALE MRNA] (ISOFORM 2)</scope>
    <source>
        <tissue>Mammary gland</tissue>
    </source>
</reference>
<reference key="4">
    <citation type="journal article" date="1997" name="Curr. Biol.">
        <title>Atm-dependent interactions of a mammalian chk1 homolog with meiotic chromosomes.</title>
        <authorList>
            <person name="Flaggs G."/>
            <person name="Plug A.W."/>
            <person name="Dunks K.M."/>
            <person name="Mundt K.E."/>
            <person name="Ford J.C."/>
            <person name="Quiggle M.R.E."/>
            <person name="Taylor E.M."/>
            <person name="Westphal C.H."/>
            <person name="Ashley T."/>
            <person name="Hoekstra M.F."/>
            <person name="Carr A.M."/>
        </authorList>
    </citation>
    <scope>NUCLEOTIDE SEQUENCE [MRNA] OF 204-450 (ISOFORMS 1/2)</scope>
    <scope>SUBCELLULAR LOCATION</scope>
    <scope>DEVELOPMENTAL STAGE</scope>
</reference>
<reference key="5">
    <citation type="journal article" date="2000" name="Genes Dev.">
        <title>Aberrant cell cycle checkpoint function and early embryonic death in Chk1(-/-) mice.</title>
        <authorList>
            <person name="Takai H."/>
            <person name="Tominaga K."/>
            <person name="Motoyama N."/>
            <person name="Minamishima Y.A."/>
            <person name="Nagahama H."/>
            <person name="Tsukiyama T."/>
            <person name="Ikeda K."/>
            <person name="Nakayama K."/>
            <person name="Nakanishi M."/>
            <person name="Nakayama K."/>
        </authorList>
    </citation>
    <scope>FUNCTION</scope>
    <scope>DISRUPTION PHENOTYPE</scope>
</reference>
<reference key="6">
    <citation type="journal article" date="2000" name="Genes Dev.">
        <title>Chk1 is an essential kinase that is regulated by Atr and required for the G(2)/M DNA damage checkpoint.</title>
        <authorList>
            <person name="Liu Q."/>
            <person name="Guntuku S."/>
            <person name="Cui X.-S."/>
            <person name="Matsuoka S."/>
            <person name="Cortez D."/>
            <person name="Tamai K."/>
            <person name="Luo G."/>
            <person name="Carattini-Rivera S."/>
            <person name="DeMayo F."/>
            <person name="Bradley A."/>
            <person name="Donehower L.A."/>
            <person name="Elledge S.J."/>
        </authorList>
    </citation>
    <scope>FUNCTION IN G2/M DNA DAMAGE CHECKPOINT</scope>
</reference>
<reference key="7">
    <citation type="journal article" date="2004" name="Cancer Cell">
        <title>Chk1 is haploinsufficient for multiple functions critical to tumor suppression.</title>
        <authorList>
            <person name="Lam M.H."/>
            <person name="Liu Q."/>
            <person name="Elledge S.J."/>
            <person name="Rosen J.M."/>
        </authorList>
    </citation>
    <scope>FUNCTION</scope>
</reference>
<reference key="8">
    <citation type="journal article" date="2005" name="Cancer Cell">
        <title>Lack of PTEN sequesters CHK1 and initiates genetic instability.</title>
        <authorList>
            <person name="Puc J."/>
            <person name="Keniry M."/>
            <person name="Li H.S."/>
            <person name="Pandita T.K."/>
            <person name="Choudhury A.D."/>
            <person name="Memeo L."/>
            <person name="Mansukhani M."/>
            <person name="Murty V.V.V.S."/>
            <person name="Gaciong Z."/>
            <person name="Meek S.E.M."/>
            <person name="Piwnica-Worms H."/>
            <person name="Hibshoosh H."/>
            <person name="Parsons R."/>
        </authorList>
    </citation>
    <scope>SUBCELLULAR LOCATION</scope>
    <scope>UBIQUITINATION</scope>
    <scope>PHOSPHORYLATION AT SER-280 AND SER-345</scope>
    <scope>MUTAGENESIS OF SER-280</scope>
</reference>
<reference key="9">
    <citation type="journal article" date="2007" name="J. Biol. Chem.">
        <title>Mice lacking protein phosphatase 5 are defective in ataxia telangiectasia mutated (ATM)-mediated cell cycle arrest.</title>
        <authorList>
            <person name="Yong W."/>
            <person name="Bao S."/>
            <person name="Chen H."/>
            <person name="Li D."/>
            <person name="Sanchez E.R."/>
            <person name="Shou W."/>
        </authorList>
    </citation>
    <scope>PHOSPHORYLATION AT SER-317</scope>
</reference>
<reference key="10">
    <citation type="journal article" date="2008" name="Cell">
        <title>Chk1 is a histone H3 threonine 11 kinase that regulates DNA damage-induced transcriptional repression.</title>
        <authorList>
            <person name="Shimada M."/>
            <person name="Niida H."/>
            <person name="Zineldeen D.H."/>
            <person name="Tagami H."/>
            <person name="Tanaka M."/>
            <person name="Saito H."/>
            <person name="Nakanishi M."/>
        </authorList>
    </citation>
    <scope>FUNCTION IN EPIGENETIC REGULATION OF TRANSCRIPTION</scope>
    <scope>CATALYTIC ACTIVITY</scope>
    <scope>SUBCELLULAR LOCATION</scope>
</reference>
<reference key="11">
    <citation type="journal article" date="2010" name="Cell">
        <title>A tissue-specific atlas of mouse protein phosphorylation and expression.</title>
        <authorList>
            <person name="Huttlin E.L."/>
            <person name="Jedrychowski M.P."/>
            <person name="Elias J.E."/>
            <person name="Goswami T."/>
            <person name="Rad R."/>
            <person name="Beausoleil S.A."/>
            <person name="Villen J."/>
            <person name="Haas W."/>
            <person name="Sowa M.E."/>
            <person name="Gygi S.P."/>
        </authorList>
    </citation>
    <scope>PHOSPHORYLATION [LARGE SCALE ANALYSIS] AT SER-463</scope>
    <scope>IDENTIFICATION BY MASS SPECTROMETRY [LARGE SCALE ANALYSIS]</scope>
    <source>
        <tissue>Spleen</tissue>
    </source>
</reference>
<reference key="12">
    <citation type="journal article" date="2013" name="PLoS ONE">
        <title>Mammalian TIMELESS is involved in period determination and DNA damage-dependent phase advancing of the circadian clock.</title>
        <authorList>
            <person name="Engelen E."/>
            <person name="Janssens R.C."/>
            <person name="Yagita K."/>
            <person name="Smits V.A."/>
            <person name="van der Horst G.T."/>
            <person name="Tamanini F."/>
        </authorList>
    </citation>
    <scope>INTERACTION WITH TIMELESS</scope>
</reference>
<evidence type="ECO:0000250" key="1"/>
<evidence type="ECO:0000250" key="2">
    <source>
        <dbReference type="UniProtKB" id="O14757"/>
    </source>
</evidence>
<evidence type="ECO:0000255" key="3">
    <source>
        <dbReference type="PROSITE-ProRule" id="PRU00159"/>
    </source>
</evidence>
<evidence type="ECO:0000255" key="4">
    <source>
        <dbReference type="PROSITE-ProRule" id="PRU10027"/>
    </source>
</evidence>
<evidence type="ECO:0000256" key="5">
    <source>
        <dbReference type="SAM" id="MobiDB-lite"/>
    </source>
</evidence>
<evidence type="ECO:0000269" key="6">
    <source>
    </source>
</evidence>
<evidence type="ECO:0000269" key="7">
    <source>
    </source>
</evidence>
<evidence type="ECO:0000269" key="8">
    <source>
    </source>
</evidence>
<evidence type="ECO:0000269" key="9">
    <source>
    </source>
</evidence>
<evidence type="ECO:0000269" key="10">
    <source>
    </source>
</evidence>
<evidence type="ECO:0000269" key="11">
    <source>
    </source>
</evidence>
<evidence type="ECO:0000269" key="12">
    <source>
    </source>
</evidence>
<evidence type="ECO:0000269" key="13">
    <source>
    </source>
</evidence>
<evidence type="ECO:0000269" key="14">
    <source>
    </source>
</evidence>
<evidence type="ECO:0000303" key="15">
    <source>
    </source>
</evidence>
<evidence type="ECO:0000305" key="16"/>
<evidence type="ECO:0007744" key="17">
    <source>
    </source>
</evidence>
<feature type="chain" id="PRO_0000085849" description="Serine/threonine-protein kinase Chk1">
    <location>
        <begin position="1"/>
        <end position="476"/>
    </location>
</feature>
<feature type="domain" description="Protein kinase" evidence="3">
    <location>
        <begin position="9"/>
        <end position="265"/>
    </location>
</feature>
<feature type="region of interest" description="Interaction with CLSPN" evidence="1">
    <location>
        <begin position="1"/>
        <end position="265"/>
    </location>
</feature>
<feature type="region of interest" description="Disordered" evidence="5">
    <location>
        <begin position="267"/>
        <end position="331"/>
    </location>
</feature>
<feature type="region of interest" description="Autoinhibitory region" evidence="1">
    <location>
        <begin position="391"/>
        <end position="476"/>
    </location>
</feature>
<feature type="compositionally biased region" description="Low complexity" evidence="5">
    <location>
        <begin position="280"/>
        <end position="291"/>
    </location>
</feature>
<feature type="compositionally biased region" description="Polar residues" evidence="5">
    <location>
        <begin position="298"/>
        <end position="320"/>
    </location>
</feature>
<feature type="active site" description="Proton acceptor" evidence="3 4">
    <location>
        <position position="130"/>
    </location>
</feature>
<feature type="binding site" evidence="3">
    <location>
        <begin position="15"/>
        <end position="23"/>
    </location>
    <ligand>
        <name>ATP</name>
        <dbReference type="ChEBI" id="CHEBI:30616"/>
    </ligand>
</feature>
<feature type="binding site" evidence="3">
    <location>
        <position position="38"/>
    </location>
    <ligand>
        <name>ATP</name>
        <dbReference type="ChEBI" id="CHEBI:30616"/>
    </ligand>
</feature>
<feature type="modified residue" description="Phosphoserine; by PKB/AKT1" evidence="9">
    <location>
        <position position="280"/>
    </location>
</feature>
<feature type="modified residue" description="Phosphoserine" evidence="2">
    <location>
        <position position="286"/>
    </location>
</feature>
<feature type="modified residue" description="Phosphoserine" evidence="2">
    <location>
        <position position="296"/>
    </location>
</feature>
<feature type="modified residue" description="Phosphoserine" evidence="2">
    <location>
        <position position="301"/>
    </location>
</feature>
<feature type="modified residue" description="Phosphoserine; by ATM and ATR" evidence="10">
    <location>
        <position position="317"/>
    </location>
</feature>
<feature type="modified residue" description="Phosphoserine; by ATR" evidence="9">
    <location>
        <position position="345"/>
    </location>
</feature>
<feature type="modified residue" description="Phosphoserine" evidence="17">
    <location>
        <position position="463"/>
    </location>
</feature>
<feature type="modified residue" description="Phosphoserine" evidence="2">
    <location>
        <position position="467"/>
    </location>
</feature>
<feature type="modified residue" description="Phosphoserine" evidence="2">
    <location>
        <position position="468"/>
    </location>
</feature>
<feature type="cross-link" description="Glycyl lysine isopeptide (Lys-Gly) (interchain with G-Cter in ubiquitin)" evidence="2">
    <location>
        <position position="132"/>
    </location>
</feature>
<feature type="cross-link" description="Glycyl lysine isopeptide (Lys-Gly) (interchain with G-Cter in ubiquitin)" evidence="2">
    <location>
        <position position="436"/>
    </location>
</feature>
<feature type="splice variant" id="VSP_015791" description="In isoform 2." evidence="15">
    <location>
        <begin position="1"/>
        <end position="94"/>
    </location>
</feature>
<feature type="splice variant" id="VSP_015792" description="In isoform 2." evidence="15">
    <original>RIE</original>
    <variation>MEK</variation>
    <location>
        <begin position="95"/>
        <end position="97"/>
    </location>
</feature>
<feature type="mutagenesis site" description="Enhances cell cycle arrest." evidence="9">
    <original>S</original>
    <variation>A</variation>
    <location>
        <position position="280"/>
    </location>
</feature>
<feature type="mutagenesis site" description="Promotes mono and/or diubiquitination and nuclear exclusion. Reduces phosphorylation at S-345." evidence="9">
    <original>S</original>
    <variation>E</variation>
    <location>
        <position position="280"/>
    </location>
</feature>
<feature type="sequence conflict" description="In Ref. 1; AAC53334." evidence="16" ref="1">
    <original>E</original>
    <variation>Q</variation>
    <location>
        <position position="33"/>
    </location>
</feature>
<feature type="sequence conflict" description="In Ref. 1; AAC53334." evidence="16" ref="1">
    <original>E</original>
    <variation>Q</variation>
    <location>
        <position position="50"/>
    </location>
</feature>
<feature type="sequence conflict" description="In Ref. 4; AAB88853." evidence="16" ref="4">
    <original>SDWKE</original>
    <variation>LIVKK</variation>
    <location>
        <begin position="219"/>
        <end position="223"/>
    </location>
</feature>
<feature type="sequence conflict" description="In Ref. 4; AAB88853." evidence="16" ref="4">
    <original>A</original>
    <variation>S</variation>
    <location>
        <position position="252"/>
    </location>
</feature>
<feature type="sequence conflict" description="In Ref. 1; AAC53334." evidence="16" ref="1">
    <original>S</original>
    <variation>F</variation>
    <location>
        <position position="365"/>
    </location>
</feature>
<feature type="sequence conflict" description="In Ref. 4; AAB88853." evidence="16" ref="4">
    <original>LE</original>
    <variation>YN</variation>
    <location>
        <begin position="449"/>
        <end position="450"/>
    </location>
</feature>
<protein>
    <recommendedName>
        <fullName>Serine/threonine-protein kinase Chk1</fullName>
        <ecNumber evidence="11">2.7.11.1</ecNumber>
    </recommendedName>
    <alternativeName>
        <fullName>CHK1 checkpoint homolog</fullName>
    </alternativeName>
    <alternativeName>
        <fullName>Checkpoint kinase-1</fullName>
    </alternativeName>
</protein>
<keyword id="KW-0025">Alternative splicing</keyword>
<keyword id="KW-0067">ATP-binding</keyword>
<keyword id="KW-0131">Cell cycle</keyword>
<keyword id="KW-0158">Chromosome</keyword>
<keyword id="KW-0963">Cytoplasm</keyword>
<keyword id="KW-0206">Cytoskeleton</keyword>
<keyword id="KW-0227">DNA damage</keyword>
<keyword id="KW-0234">DNA repair</keyword>
<keyword id="KW-1017">Isopeptide bond</keyword>
<keyword id="KW-0418">Kinase</keyword>
<keyword id="KW-0547">Nucleotide-binding</keyword>
<keyword id="KW-0539">Nucleus</keyword>
<keyword id="KW-0597">Phosphoprotein</keyword>
<keyword id="KW-1185">Reference proteome</keyword>
<keyword id="KW-0723">Serine/threonine-protein kinase</keyword>
<keyword id="KW-0808">Transferase</keyword>
<keyword id="KW-0832">Ubl conjugation</keyword>
<gene>
    <name type="primary">Chek1</name>
    <name type="synonym">Chk1</name>
</gene>
<accession>O35280</accession>
<accession>O54925</accession>
<accession>Q8CI40</accession>
<accession>Q9D0N2</accession>
<sequence length="476" mass="54381">MAVPFVEDWDLVQTLGEGAYGEVQLAVNRITEEAVAVKIVDMKRAIDCPENIKKEICINKMLSHENVVKFYGHRREGHIQYLFLEYCSGGELFDRIEPDIGMPEQDAQRFFHQLMAGVVYLHGIGITHRDIKPENLLLDERDNLKISDFGLATVFRHNNRERLLNKMCGTLPYVAPELLKRKEFHAEPVDVWSCGIVLTAMLAGELPWDQPSDSCQEYSDWKEKKTYLNPWKKIDSAPLALLHKILVETPSARITIPDIKKDRWYNKPLNRGAKRPRATSGGMSESSSGFSKHIHSNLDFSPVNNGSSEETVKFSSSQPEPRTGLSLWDTGPSNVDKLVQGISFSQPTCPEHMLVNSQLLGTPGSSQNPWQRLVKRMTRFFTKLDADKSYQCLKETFEKLGYQWKKSCMNQVTVSTTDRRNNKLIFKINLVEMDEKILVDFRLSKGDGLEFKRHFLKIKGKLSDVVSSQKVWFPVT</sequence>
<proteinExistence type="evidence at protein level"/>
<organism>
    <name type="scientific">Mus musculus</name>
    <name type="common">Mouse</name>
    <dbReference type="NCBI Taxonomy" id="10090"/>
    <lineage>
        <taxon>Eukaryota</taxon>
        <taxon>Metazoa</taxon>
        <taxon>Chordata</taxon>
        <taxon>Craniata</taxon>
        <taxon>Vertebrata</taxon>
        <taxon>Euteleostomi</taxon>
        <taxon>Mammalia</taxon>
        <taxon>Eutheria</taxon>
        <taxon>Euarchontoglires</taxon>
        <taxon>Glires</taxon>
        <taxon>Rodentia</taxon>
        <taxon>Myomorpha</taxon>
        <taxon>Muroidea</taxon>
        <taxon>Muridae</taxon>
        <taxon>Murinae</taxon>
        <taxon>Mus</taxon>
        <taxon>Mus</taxon>
    </lineage>
</organism>
<comment type="function">
    <text evidence="2 6 7 8 11">Serine/threonine-protein kinase which is required for checkpoint-mediated cell cycle arrest and activation of DNA repair in response to the presence of DNA damage or unreplicated DNA (PubMed:10859163, PubMed:10859164, PubMed:15261141). May also negatively regulate cell cycle progression during unperturbed cell cycles (PubMed:10859163, PubMed:10859164, PubMed:15261141). This regulation is achieved by a number of mechanisms that together help to preserve the integrity of the genome (PubMed:10859163, PubMed:10859164, PubMed:15261141). Recognizes the substrate consensus sequence [R-X-X-S/T] (PubMed:10859163, PubMed:10859164, PubMed:15261141). Binds to and phosphorylates CDC25A, CDC25B and CDC25C. Phosphorylation of CDC25A at 'Ser-178' and 'Thr-507' and phosphorylation of CDC25C at 'Ser-216' creates binding sites for 14-3-3 proteins which inhibit CDC25A and CDC25C. Phosphorylation of CDC25A at 'Ser-76', 'Ser-124', 'Ser-178', 'Ser-279' and 'Ser-293' promotes proteolysis of CDC25A. Phosphorylation of CDC25A at 'Ser-76' primes the protein for subsequent phosphorylation at 'Ser-79', 'Ser-82' and 'Ser-88' by NEK11, which is required for polyubiquitination and degradation of CDCD25A. Inhibition of CDC25 leads to increased inhibitory tyrosine phosphorylation of CDK-cyclin complexes and blocks cell cycle progression. Also phosphorylates NEK6. Binds to and phosphorylates RAD51 at 'Thr-309', which promotes the release of RAD51 from BRCA2 and enhances the association of RAD51 with chromatin, thereby promoting DNA repair by homologous recombination. Phosphorylates multiple sites within the C-terminus of TP53, which promotes activation of TP53 by acetylation and promotes cell cycle arrest and suppression of cellular proliferation. Also promotes repair of DNA cross-links through phosphorylation of FANCE. Binds to and phosphorylates TLK1 at 'Ser-743', which prevents the TLK1-dependent phosphorylation of the chromatin assembly factor ASF1A. This may enhance chromatin assembly both in the presence or absence of DNA damage. May also play a role in replication fork maintenance through regulation of PCNA (By similarity). May regulate the transcription of genes that regulate cell-cycle progression through the phosphorylation of histones. Phosphorylates histone H3.1 (to form H3T11ph), which leads to epigenetic inhibition of a subset of genes (PubMed:18243098). May also phosphorylate RB1 to promote its interaction with the E2F family of transcription factors and subsequent cell cycle arrest. Phosphorylates SPRTN, promoting SPRTN recruitment to chromatin (By similarity). Reduces replication stress and activates the G2/M checkpoint, by phosphorylating and inactivating PABIR1/FAM122A and promoting the serine/threonine-protein phosphatase 2A-mediated dephosphorylation and stabilization of WEE1 levels and activity (By similarity).</text>
</comment>
<comment type="catalytic activity">
    <reaction evidence="11">
        <text>L-seryl-[protein] + ATP = O-phospho-L-seryl-[protein] + ADP + H(+)</text>
        <dbReference type="Rhea" id="RHEA:17989"/>
        <dbReference type="Rhea" id="RHEA-COMP:9863"/>
        <dbReference type="Rhea" id="RHEA-COMP:11604"/>
        <dbReference type="ChEBI" id="CHEBI:15378"/>
        <dbReference type="ChEBI" id="CHEBI:29999"/>
        <dbReference type="ChEBI" id="CHEBI:30616"/>
        <dbReference type="ChEBI" id="CHEBI:83421"/>
        <dbReference type="ChEBI" id="CHEBI:456216"/>
        <dbReference type="EC" id="2.7.11.1"/>
    </reaction>
</comment>
<comment type="catalytic activity">
    <reaction evidence="11">
        <text>L-threonyl-[protein] + ATP = O-phospho-L-threonyl-[protein] + ADP + H(+)</text>
        <dbReference type="Rhea" id="RHEA:46608"/>
        <dbReference type="Rhea" id="RHEA-COMP:11060"/>
        <dbReference type="Rhea" id="RHEA-COMP:11605"/>
        <dbReference type="ChEBI" id="CHEBI:15378"/>
        <dbReference type="ChEBI" id="CHEBI:30013"/>
        <dbReference type="ChEBI" id="CHEBI:30616"/>
        <dbReference type="ChEBI" id="CHEBI:61977"/>
        <dbReference type="ChEBI" id="CHEBI:456216"/>
        <dbReference type="EC" id="2.7.11.1"/>
    </reaction>
</comment>
<comment type="activity regulation">
    <text evidence="2">Activated through phosphorylation predominantly by ATR but also by ATM in response to DNA damage or inhibition of DNA replication. Activation is modulated by several mediators including CLSPN, BRCA1 and FEM1B. Proteolytic cleavage at the C-terminus by SPRTN during normal DNA replication activates the protein kinase activity.</text>
</comment>
<comment type="subunit">
    <text evidence="2 12">Interacts (phosphorylated by ATR) with RAD51 (By similarity). Interacts with and phosphorylates CLSPN, an adapter protein that regulates the ATR-dependent phosphorylation of CHEK1 (By similarity). Interacts with BRCA1 (By similarity). Interacts with and phosphorylates CDC25A, CDC25B and CDC25C (By similarity). Interacts with FBXO6, which regulates CHEK1 (By similarity). Interacts with PPM1D, which regulates CHEK1 through dephosphorylation (By similarity). Interacts with TIMELESS; DNA damage-dependent (PubMed:23418588). Interacts with FEM1B; activates CHEK1 in response to stress (By similarity). Interacts with TLK1 (By similarity). Interacts with XPO1 and YWHAZ (By similarity). Interacts with CDK5RAP3; antagonizes CHEK1 (By similarity).</text>
</comment>
<comment type="subcellular location">
    <subcellularLocation>
        <location evidence="9 14">Nucleus</location>
    </subcellularLocation>
    <subcellularLocation>
        <location evidence="11 14">Chromosome</location>
    </subcellularLocation>
    <subcellularLocation>
        <location evidence="2">Cytoplasm</location>
    </subcellularLocation>
    <subcellularLocation>
        <location evidence="2">Cytoplasm</location>
        <location evidence="2">Cytoskeleton</location>
        <location evidence="2">Microtubule organizing center</location>
        <location evidence="2">Centrosome</location>
    </subcellularLocation>
    <text evidence="2">Nuclear export is mediated at least in part by XPO1/CRM1. Also localizes to the centrosome specifically during interphase, where it may protect centrosomal CDC2 kinase from inappropriate activation by cytoplasmic CDC25B. Proteolytic cleavage at the C-terminus by SPRTN promotes removal from chromatin.</text>
</comment>
<comment type="alternative products">
    <event type="alternative splicing"/>
    <isoform>
        <id>O35280-1</id>
        <name>1</name>
        <sequence type="displayed"/>
    </isoform>
    <isoform>
        <id>O35280-2</id>
        <name>2</name>
        <sequence type="described" ref="VSP_015791 VSP_015792"/>
    </isoform>
</comment>
<comment type="tissue specificity">
    <text evidence="13">Found in all adult tissues tested. Elevated expression in testis, lung and spleen. 15.5 day old embryos show ubiquitous expression with strong expression in brain, liver, kidney, pancreas, intestine, thymus and lung.</text>
</comment>
<comment type="developmental stage">
    <text evidence="14">In the testis, present in cells undergoing meiosis I. Not detected in peripheral cells in seminiferous tubules that are undergoing pre-meiotic DNA synthesis or in late condensing or mature sperm.</text>
</comment>
<comment type="domain">
    <text evidence="2">The autoinhibitory region (AIR) inhibits the activity of the kinase domain.</text>
</comment>
<comment type="PTM">
    <text evidence="9 10">Phosphorylated by ATR in a RAD17-dependent manner in response to ultraviolet irradiation and inhibition of DNA replication. Phosphorylated by ATM in response to ionizing irradiation. ATM and ATR can both phosphorylate Ser-317 and Ser-345 and this results in enhanced kinase activity. Phosphorylation at Ser-345 induces a change in the conformation of the protein, activates the kinase activity and is a prerequisite for interaction with FBXO6 and subsequent ubiquitination at Lys-436. Phosphorylation at Ser-345 also increases binding to 14-3-3 proteins and promotes nuclear retention. Conversely, dephosphorylation at Ser-345 by PPM1D may contribute to exit from checkpoint mediated cell cycle arrest. Phosphorylation at Ser-280 by AKT1/PKB, may promote mono and/or diubiquitination. Also phosphorylated at undefined residues during mitotic arrest, resulting in decreased activity.</text>
</comment>
<comment type="PTM">
    <text evidence="2 9">Ubiquitinated (PubMed:15710331). Mono or diubiquitination promotes nuclear exclusion (PubMed:15710331). The activated form (phosphorylated on Ser-345) is polyubiquitinated at Lys-436 by some SCF-type E3 ubiquitin ligase complex containing FBXO6 promoting its degradation (By similarity). Ubiquitination and degradation are required to terminate the checkpoint and ensure that activated CHEK1 does not accumulate as cells progress through S phase, when replication forks encounter transient impediments during normal DNA replication. 'Lys-63'-mediated ubiquitination by TRAF4 at Lys-132 activates cell cycle arrest and activation of DNA repair (By similarity).</text>
</comment>
<comment type="PTM">
    <text evidence="2">Proteolytically cleaved at the C-terminus by SPRTN during normal DNA replication, thereby promoting CHEK1 removal from chromatin and activating the protein kinase activity.</text>
</comment>
<comment type="disruption phenotype">
    <text evidence="6">Mice die of apoptosis at the blastocyst stage.</text>
</comment>
<comment type="miscellaneous">
    <text>Haploinsufficient for the suppression of genomic instability and tumor progression.</text>
</comment>
<comment type="miscellaneous">
    <molecule>Isoform 2</molecule>
    <text evidence="16">3 initiator methionines can be considered. If this isoform were to start at the first ATG, it would produce a 28 amino acid-long peptide, sharing the first 22 amino acids with the canonical sequence (isoform 1) and differing in the last 6 residues (VQLAVN -&gt; ARHRDA). An initiation at this site could target the mRNA to nonsense-mediated mRNA decay and, in this case, the peptide would be produced at very low levels. The second possible translation initiation site would lead to the synthesis of the sequence shown in this entry as isoform 2. However, the Kozak sequence for this site is not optimal. Finally the third potential initiator methionine corresponds to position 167 in isoform 1 and would lead to the synthesis of a 310 amino acid-long protein identical to isoform 1 residues 167 through 476.</text>
</comment>
<comment type="similarity">
    <text evidence="16">Belongs to the protein kinase superfamily. CAMK Ser/Thr protein kinase family. NIM1 subfamily.</text>
</comment>
<comment type="sequence caution" evidence="16">
    <conflict type="erroneous initiation">
        <sequence resource="EMBL-CDS" id="AAH37613"/>
    </conflict>
    <text>Extended N-terminus.</text>
</comment>
<dbReference type="EC" id="2.7.11.1" evidence="11"/>
<dbReference type="EMBL" id="AF016583">
    <property type="protein sequence ID" value="AAC53334.1"/>
    <property type="molecule type" value="mRNA"/>
</dbReference>
<dbReference type="EMBL" id="AK011258">
    <property type="protein sequence ID" value="BAB27500.1"/>
    <property type="molecule type" value="mRNA"/>
</dbReference>
<dbReference type="EMBL" id="AK033179">
    <property type="protein sequence ID" value="BAC28185.1"/>
    <property type="molecule type" value="mRNA"/>
</dbReference>
<dbReference type="EMBL" id="AK045336">
    <property type="protein sequence ID" value="BAC32315.1"/>
    <property type="molecule type" value="mRNA"/>
</dbReference>
<dbReference type="EMBL" id="BC037613">
    <property type="protein sequence ID" value="AAH37613.1"/>
    <property type="status" value="ALT_INIT"/>
    <property type="molecule type" value="mRNA"/>
</dbReference>
<dbReference type="EMBL" id="AF032875">
    <property type="protein sequence ID" value="AAB88853.1"/>
    <property type="molecule type" value="mRNA"/>
</dbReference>
<dbReference type="CCDS" id="CCDS22972.1">
    <molecule id="O35280-1"/>
</dbReference>
<dbReference type="RefSeq" id="NP_001397134.1">
    <molecule id="O35280-2"/>
    <property type="nucleotide sequence ID" value="NM_001410205.1"/>
</dbReference>
<dbReference type="RefSeq" id="NP_001397136.1">
    <molecule id="O35280-1"/>
    <property type="nucleotide sequence ID" value="NM_001410207.1"/>
</dbReference>
<dbReference type="RefSeq" id="NP_031717.2">
    <molecule id="O35280-1"/>
    <property type="nucleotide sequence ID" value="NM_007691.5"/>
</dbReference>
<dbReference type="SMR" id="O35280"/>
<dbReference type="BioGRID" id="198694">
    <property type="interactions" value="17"/>
</dbReference>
<dbReference type="FunCoup" id="O35280">
    <property type="interactions" value="3049"/>
</dbReference>
<dbReference type="IntAct" id="O35280">
    <property type="interactions" value="8"/>
</dbReference>
<dbReference type="MINT" id="O35280"/>
<dbReference type="STRING" id="10090.ENSMUSP00000134388"/>
<dbReference type="iPTMnet" id="O35280"/>
<dbReference type="PhosphoSitePlus" id="O35280"/>
<dbReference type="jPOST" id="O35280"/>
<dbReference type="PaxDb" id="10090-ENSMUSP00000134388"/>
<dbReference type="PeptideAtlas" id="O35280"/>
<dbReference type="ProteomicsDB" id="281554">
    <molecule id="O35280-1"/>
</dbReference>
<dbReference type="ProteomicsDB" id="281555">
    <molecule id="O35280-2"/>
</dbReference>
<dbReference type="Pumba" id="O35280"/>
<dbReference type="Antibodypedia" id="3671">
    <property type="antibodies" value="1863 antibodies from 48 providers"/>
</dbReference>
<dbReference type="DNASU" id="12649"/>
<dbReference type="Ensembl" id="ENSMUST00000034625.12">
    <molecule id="O35280-1"/>
    <property type="protein sequence ID" value="ENSMUSP00000034625.6"/>
    <property type="gene ID" value="ENSMUSG00000032113.17"/>
</dbReference>
<dbReference type="Ensembl" id="ENSMUST00000172702.9">
    <molecule id="O35280-1"/>
    <property type="protein sequence ID" value="ENSMUSP00000134388.2"/>
    <property type="gene ID" value="ENSMUSG00000032113.17"/>
</dbReference>
<dbReference type="GeneID" id="12649"/>
<dbReference type="KEGG" id="mmu:12649"/>
<dbReference type="UCSC" id="uc009otv.1">
    <molecule id="O35280-1"/>
    <property type="organism name" value="mouse"/>
</dbReference>
<dbReference type="UCSC" id="uc009otx.2">
    <molecule id="O35280-2"/>
    <property type="organism name" value="mouse"/>
</dbReference>
<dbReference type="AGR" id="MGI:1202065"/>
<dbReference type="CTD" id="1111"/>
<dbReference type="MGI" id="MGI:1202065">
    <property type="gene designation" value="Chek1"/>
</dbReference>
<dbReference type="VEuPathDB" id="HostDB:ENSMUSG00000032113"/>
<dbReference type="eggNOG" id="KOG0590">
    <property type="taxonomic scope" value="Eukaryota"/>
</dbReference>
<dbReference type="GeneTree" id="ENSGT00940000159682"/>
<dbReference type="InParanoid" id="O35280"/>
<dbReference type="OMA" id="GYTCKVG"/>
<dbReference type="OrthoDB" id="539158at2759"/>
<dbReference type="PhylomeDB" id="O35280"/>
<dbReference type="TreeFam" id="TF351441"/>
<dbReference type="BRENDA" id="2.7.11.1">
    <property type="organism ID" value="3474"/>
</dbReference>
<dbReference type="Reactome" id="R-MMU-1433557">
    <property type="pathway name" value="Signaling by SCF-KIT"/>
</dbReference>
<dbReference type="Reactome" id="R-MMU-176187">
    <property type="pathway name" value="Activation of ATR in response to replication stress"/>
</dbReference>
<dbReference type="Reactome" id="R-MMU-5693607">
    <property type="pathway name" value="Processing of DNA double-strand break ends"/>
</dbReference>
<dbReference type="Reactome" id="R-MMU-5693616">
    <property type="pathway name" value="Presynaptic phase of homologous DNA pairing and strand exchange"/>
</dbReference>
<dbReference type="Reactome" id="R-MMU-6804756">
    <property type="pathway name" value="Regulation of TP53 Activity through Phosphorylation"/>
</dbReference>
<dbReference type="Reactome" id="R-MMU-69473">
    <property type="pathway name" value="G2/M DNA damage checkpoint"/>
</dbReference>
<dbReference type="Reactome" id="R-MMU-69601">
    <property type="pathway name" value="Ubiquitin Mediated Degradation of Phosphorylated Cdc25A"/>
</dbReference>
<dbReference type="Reactome" id="R-MMU-8953750">
    <property type="pathway name" value="Transcriptional Regulation by E2F6"/>
</dbReference>
<dbReference type="BioGRID-ORCS" id="12649">
    <property type="hits" value="31 hits in 120 CRISPR screens"/>
</dbReference>
<dbReference type="CD-CODE" id="01CA17F3">
    <property type="entry name" value="Centrosome"/>
</dbReference>
<dbReference type="PRO" id="PR:O35280"/>
<dbReference type="Proteomes" id="UP000000589">
    <property type="component" value="Chromosome 9"/>
</dbReference>
<dbReference type="RNAct" id="O35280">
    <property type="molecule type" value="protein"/>
</dbReference>
<dbReference type="Bgee" id="ENSMUSG00000032113">
    <property type="expression patterns" value="Expressed in secondary oocyte and 172 other cell types or tissues"/>
</dbReference>
<dbReference type="ExpressionAtlas" id="O35280">
    <property type="expression patterns" value="baseline and differential"/>
</dbReference>
<dbReference type="GO" id="GO:0005813">
    <property type="term" value="C:centrosome"/>
    <property type="evidence" value="ECO:0000250"/>
    <property type="project" value="UniProtKB"/>
</dbReference>
<dbReference type="GO" id="GO:0000785">
    <property type="term" value="C:chromatin"/>
    <property type="evidence" value="ECO:0000314"/>
    <property type="project" value="UniProtKB"/>
</dbReference>
<dbReference type="GO" id="GO:0000781">
    <property type="term" value="C:chromosome, telomeric region"/>
    <property type="evidence" value="ECO:0007669"/>
    <property type="project" value="Ensembl"/>
</dbReference>
<dbReference type="GO" id="GO:0000794">
    <property type="term" value="C:condensed nuclear chromosome"/>
    <property type="evidence" value="ECO:0000250"/>
    <property type="project" value="UniProtKB"/>
</dbReference>
<dbReference type="GO" id="GO:0005737">
    <property type="term" value="C:cytoplasm"/>
    <property type="evidence" value="ECO:0007669"/>
    <property type="project" value="UniProtKB-SubCell"/>
</dbReference>
<dbReference type="GO" id="GO:0005654">
    <property type="term" value="C:nucleoplasm"/>
    <property type="evidence" value="ECO:0007669"/>
    <property type="project" value="Ensembl"/>
</dbReference>
<dbReference type="GO" id="GO:0005634">
    <property type="term" value="C:nucleus"/>
    <property type="evidence" value="ECO:0000314"/>
    <property type="project" value="MGI"/>
</dbReference>
<dbReference type="GO" id="GO:0032991">
    <property type="term" value="C:protein-containing complex"/>
    <property type="evidence" value="ECO:0007669"/>
    <property type="project" value="Ensembl"/>
</dbReference>
<dbReference type="GO" id="GO:0005657">
    <property type="term" value="C:replication fork"/>
    <property type="evidence" value="ECO:0000314"/>
    <property type="project" value="MGI"/>
</dbReference>
<dbReference type="GO" id="GO:0005524">
    <property type="term" value="F:ATP binding"/>
    <property type="evidence" value="ECO:0007669"/>
    <property type="project" value="UniProtKB-KW"/>
</dbReference>
<dbReference type="GO" id="GO:0035402">
    <property type="term" value="F:histone H3T11 kinase activity"/>
    <property type="evidence" value="ECO:0000314"/>
    <property type="project" value="UniProtKB"/>
</dbReference>
<dbReference type="GO" id="GO:0019904">
    <property type="term" value="F:protein domain specific binding"/>
    <property type="evidence" value="ECO:0007669"/>
    <property type="project" value="Ensembl"/>
</dbReference>
<dbReference type="GO" id="GO:0004672">
    <property type="term" value="F:protein kinase activity"/>
    <property type="evidence" value="ECO:0000315"/>
    <property type="project" value="MGI"/>
</dbReference>
<dbReference type="GO" id="GO:0106310">
    <property type="term" value="F:protein serine kinase activity"/>
    <property type="evidence" value="ECO:0007669"/>
    <property type="project" value="RHEA"/>
</dbReference>
<dbReference type="GO" id="GO:0004674">
    <property type="term" value="F:protein serine/threonine kinase activity"/>
    <property type="evidence" value="ECO:0000250"/>
    <property type="project" value="UniProtKB"/>
</dbReference>
<dbReference type="GO" id="GO:1902742">
    <property type="term" value="P:apoptotic process involved in development"/>
    <property type="evidence" value="ECO:0000315"/>
    <property type="project" value="MGI"/>
</dbReference>
<dbReference type="GO" id="GO:0071260">
    <property type="term" value="P:cellular response to mechanical stimulus"/>
    <property type="evidence" value="ECO:0007669"/>
    <property type="project" value="Ensembl"/>
</dbReference>
<dbReference type="GO" id="GO:0006338">
    <property type="term" value="P:chromatin remodeling"/>
    <property type="evidence" value="ECO:0000314"/>
    <property type="project" value="UniProtKB"/>
</dbReference>
<dbReference type="GO" id="GO:0000077">
    <property type="term" value="P:DNA damage checkpoint signaling"/>
    <property type="evidence" value="ECO:0000314"/>
    <property type="project" value="MGI"/>
</dbReference>
<dbReference type="GO" id="GO:0006974">
    <property type="term" value="P:DNA damage response"/>
    <property type="evidence" value="ECO:0000314"/>
    <property type="project" value="MGI"/>
</dbReference>
<dbReference type="GO" id="GO:0006281">
    <property type="term" value="P:DNA repair"/>
    <property type="evidence" value="ECO:0000314"/>
    <property type="project" value="MGI"/>
</dbReference>
<dbReference type="GO" id="GO:0000086">
    <property type="term" value="P:G2/M transition of mitotic cell cycle"/>
    <property type="evidence" value="ECO:0000315"/>
    <property type="project" value="MGI"/>
</dbReference>
<dbReference type="GO" id="GO:0001833">
    <property type="term" value="P:inner cell mass cell proliferation"/>
    <property type="evidence" value="ECO:0000315"/>
    <property type="project" value="MGI"/>
</dbReference>
<dbReference type="GO" id="GO:0007095">
    <property type="term" value="P:mitotic G2 DNA damage checkpoint signaling"/>
    <property type="evidence" value="ECO:0000250"/>
    <property type="project" value="UniProtKB"/>
</dbReference>
<dbReference type="GO" id="GO:0044818">
    <property type="term" value="P:mitotic G2/M transition checkpoint"/>
    <property type="evidence" value="ECO:0000250"/>
    <property type="project" value="UniProtKB"/>
</dbReference>
<dbReference type="GO" id="GO:0045814">
    <property type="term" value="P:negative regulation of gene expression, epigenetic"/>
    <property type="evidence" value="ECO:0000315"/>
    <property type="project" value="UniProtKB"/>
</dbReference>
<dbReference type="GO" id="GO:0045839">
    <property type="term" value="P:negative regulation of mitotic nuclear division"/>
    <property type="evidence" value="ECO:0000250"/>
    <property type="project" value="UniProtKB"/>
</dbReference>
<dbReference type="GO" id="GO:0006997">
    <property type="term" value="P:nucleus organization"/>
    <property type="evidence" value="ECO:0000315"/>
    <property type="project" value="MGI"/>
</dbReference>
<dbReference type="GO" id="GO:0018107">
    <property type="term" value="P:peptidyl-threonine phosphorylation"/>
    <property type="evidence" value="ECO:0000250"/>
    <property type="project" value="UniProtKB"/>
</dbReference>
<dbReference type="GO" id="GO:0045787">
    <property type="term" value="P:positive regulation of cell cycle"/>
    <property type="evidence" value="ECO:0007669"/>
    <property type="project" value="Ensembl"/>
</dbReference>
<dbReference type="GO" id="GO:0042127">
    <property type="term" value="P:regulation of cell population proliferation"/>
    <property type="evidence" value="ECO:0000315"/>
    <property type="project" value="MGI"/>
</dbReference>
<dbReference type="GO" id="GO:0010569">
    <property type="term" value="P:regulation of double-strand break repair via homologous recombination"/>
    <property type="evidence" value="ECO:0000250"/>
    <property type="project" value="UniProtKB"/>
</dbReference>
<dbReference type="GO" id="GO:0010468">
    <property type="term" value="P:regulation of gene expression"/>
    <property type="evidence" value="ECO:0000316"/>
    <property type="project" value="MGI"/>
</dbReference>
<dbReference type="GO" id="GO:0046602">
    <property type="term" value="P:regulation of mitotic centrosome separation"/>
    <property type="evidence" value="ECO:0000250"/>
    <property type="project" value="UniProtKB"/>
</dbReference>
<dbReference type="GO" id="GO:0042770">
    <property type="term" value="P:signal transduction in response to DNA damage"/>
    <property type="evidence" value="ECO:0000250"/>
    <property type="project" value="UniProtKB"/>
</dbReference>
<dbReference type="CDD" id="cd14069">
    <property type="entry name" value="STKc_Chk1"/>
    <property type="match status" value="1"/>
</dbReference>
<dbReference type="FunFam" id="1.10.510.10:FF:000301">
    <property type="entry name" value="Serine/threonine-protein kinase Chk1"/>
    <property type="match status" value="1"/>
</dbReference>
<dbReference type="FunFam" id="3.30.200.20:FF:000229">
    <property type="entry name" value="Serine/threonine-protein kinase Chk1"/>
    <property type="match status" value="1"/>
</dbReference>
<dbReference type="FunFam" id="3.30.310.80:FF:000007">
    <property type="entry name" value="Serine/threonine-protein kinase Chk1 isoform 1"/>
    <property type="match status" value="1"/>
</dbReference>
<dbReference type="Gene3D" id="3.30.310.80">
    <property type="entry name" value="Kinase associated domain 1, KA1"/>
    <property type="match status" value="1"/>
</dbReference>
<dbReference type="Gene3D" id="3.30.200.20">
    <property type="entry name" value="Phosphorylase Kinase, domain 1"/>
    <property type="match status" value="1"/>
</dbReference>
<dbReference type="Gene3D" id="1.10.510.10">
    <property type="entry name" value="Transferase(Phosphotransferase) domain 1"/>
    <property type="match status" value="1"/>
</dbReference>
<dbReference type="InterPro" id="IPR034670">
    <property type="entry name" value="Chk1_catalytic_dom"/>
</dbReference>
<dbReference type="InterPro" id="IPR011009">
    <property type="entry name" value="Kinase-like_dom_sf"/>
</dbReference>
<dbReference type="InterPro" id="IPR000719">
    <property type="entry name" value="Prot_kinase_dom"/>
</dbReference>
<dbReference type="InterPro" id="IPR017441">
    <property type="entry name" value="Protein_kinase_ATP_BS"/>
</dbReference>
<dbReference type="InterPro" id="IPR008271">
    <property type="entry name" value="Ser/Thr_kinase_AS"/>
</dbReference>
<dbReference type="PANTHER" id="PTHR24346">
    <property type="entry name" value="MAP/MICROTUBULE AFFINITY-REGULATING KINASE"/>
    <property type="match status" value="1"/>
</dbReference>
<dbReference type="PANTHER" id="PTHR24346:SF107">
    <property type="entry name" value="SERINE_THREONINE-PROTEIN KINASE CHK1"/>
    <property type="match status" value="1"/>
</dbReference>
<dbReference type="Pfam" id="PF00069">
    <property type="entry name" value="Pkinase"/>
    <property type="match status" value="1"/>
</dbReference>
<dbReference type="SMART" id="SM00220">
    <property type="entry name" value="S_TKc"/>
    <property type="match status" value="1"/>
</dbReference>
<dbReference type="SUPFAM" id="SSF56112">
    <property type="entry name" value="Protein kinase-like (PK-like)"/>
    <property type="match status" value="1"/>
</dbReference>
<dbReference type="PROSITE" id="PS00107">
    <property type="entry name" value="PROTEIN_KINASE_ATP"/>
    <property type="match status" value="1"/>
</dbReference>
<dbReference type="PROSITE" id="PS50011">
    <property type="entry name" value="PROTEIN_KINASE_DOM"/>
    <property type="match status" value="1"/>
</dbReference>
<dbReference type="PROSITE" id="PS00108">
    <property type="entry name" value="PROTEIN_KINASE_ST"/>
    <property type="match status" value="1"/>
</dbReference>